<dbReference type="EMBL" id="AK007906">
    <property type="protein sequence ID" value="BAB25340.1"/>
    <property type="molecule type" value="mRNA"/>
</dbReference>
<dbReference type="EMBL" id="AK010996">
    <property type="protein sequence ID" value="BAB27315.1"/>
    <property type="molecule type" value="mRNA"/>
</dbReference>
<dbReference type="EMBL" id="BC116961">
    <property type="protein sequence ID" value="AAI16962.1"/>
    <property type="molecule type" value="mRNA"/>
</dbReference>
<dbReference type="EMBL" id="BC116963">
    <property type="protein sequence ID" value="AAI16964.1"/>
    <property type="molecule type" value="mRNA"/>
</dbReference>
<dbReference type="CCDS" id="CCDS29545.1"/>
<dbReference type="RefSeq" id="NP_080601.2">
    <property type="nucleotide sequence ID" value="NM_026325.3"/>
</dbReference>
<dbReference type="FunCoup" id="Q9CY24">
    <property type="interactions" value="1098"/>
</dbReference>
<dbReference type="IntAct" id="Q9CY24">
    <property type="interactions" value="1"/>
</dbReference>
<dbReference type="STRING" id="10090.ENSMUSP00000010249"/>
<dbReference type="iPTMnet" id="Q9CY24"/>
<dbReference type="PhosphoSitePlus" id="Q9CY24"/>
<dbReference type="SwissPalm" id="Q9CY24"/>
<dbReference type="jPOST" id="Q9CY24"/>
<dbReference type="PeptideAtlas" id="Q9CY24"/>
<dbReference type="ProteomicsDB" id="263224"/>
<dbReference type="Pumba" id="Q9CY24"/>
<dbReference type="Antibodypedia" id="14985">
    <property type="antibodies" value="18 antibodies from 9 providers"/>
</dbReference>
<dbReference type="DNASU" id="67706"/>
<dbReference type="Ensembl" id="ENSMUST00000010249.7">
    <property type="protein sequence ID" value="ENSMUSP00000010249.6"/>
    <property type="gene ID" value="ENSMUSG00000118346.2"/>
</dbReference>
<dbReference type="GeneID" id="67706"/>
<dbReference type="KEGG" id="mmu:67706"/>
<dbReference type="UCSC" id="uc008gmt.2">
    <property type="organism name" value="mouse"/>
</dbReference>
<dbReference type="AGR" id="MGI:1914956"/>
<dbReference type="CTD" id="374395"/>
<dbReference type="MGI" id="MGI:1914956">
    <property type="gene designation" value="Tmem179b"/>
</dbReference>
<dbReference type="VEuPathDB" id="HostDB:ENSMUSG00000118346"/>
<dbReference type="GeneTree" id="ENSGT00510000048151"/>
<dbReference type="HOGENOM" id="CLU_109636_0_0_1"/>
<dbReference type="InParanoid" id="Q9CY24"/>
<dbReference type="OMA" id="YWVYTFC"/>
<dbReference type="OrthoDB" id="8914435at2759"/>
<dbReference type="PhylomeDB" id="Q9CY24"/>
<dbReference type="TreeFam" id="TF324841"/>
<dbReference type="Reactome" id="R-MMU-6798695">
    <property type="pathway name" value="Neutrophil degranulation"/>
</dbReference>
<dbReference type="BioGRID-ORCS" id="67706">
    <property type="hits" value="0 hits in 28 CRISPR screens"/>
</dbReference>
<dbReference type="ChiTaRS" id="Tmem179b">
    <property type="organism name" value="mouse"/>
</dbReference>
<dbReference type="PRO" id="PR:Q9CY24"/>
<dbReference type="Proteomes" id="UP000000589">
    <property type="component" value="Chromosome 19"/>
</dbReference>
<dbReference type="RNAct" id="Q9CY24">
    <property type="molecule type" value="protein"/>
</dbReference>
<dbReference type="Bgee" id="ENSMUSG00000118346">
    <property type="expression patterns" value="Expressed in bone marrow and 67 other cell types or tissues"/>
</dbReference>
<dbReference type="ExpressionAtlas" id="Q9CY24">
    <property type="expression patterns" value="baseline and differential"/>
</dbReference>
<dbReference type="GO" id="GO:0016020">
    <property type="term" value="C:membrane"/>
    <property type="evidence" value="ECO:0007669"/>
    <property type="project" value="UniProtKB-SubCell"/>
</dbReference>
<dbReference type="GO" id="GO:0016607">
    <property type="term" value="C:nuclear speck"/>
    <property type="evidence" value="ECO:0007669"/>
    <property type="project" value="Ensembl"/>
</dbReference>
<dbReference type="GO" id="GO:0005730">
    <property type="term" value="C:nucleolus"/>
    <property type="evidence" value="ECO:0007669"/>
    <property type="project" value="Ensembl"/>
</dbReference>
<dbReference type="InterPro" id="IPR029776">
    <property type="entry name" value="TMEM179B"/>
</dbReference>
<dbReference type="PANTHER" id="PTHR31056">
    <property type="entry name" value="TRANSMEMBRANE PROTEIN 179B"/>
    <property type="match status" value="1"/>
</dbReference>
<dbReference type="PANTHER" id="PTHR31056:SF1">
    <property type="entry name" value="TRANSMEMBRANE PROTEIN 179B"/>
    <property type="match status" value="1"/>
</dbReference>
<protein>
    <recommendedName>
        <fullName>Transmembrane protein 179B</fullName>
    </recommendedName>
</protein>
<sequence length="219" mass="23528">MALPWLQRVELLLFTAAFLCGALAAATLTRTQGSFGGNCPLYGVAALNGSSLALLGPSAPSLCYFVAGASGILALYCLLLLFFWVYSSCIEDSHRGSIGLRIALAISATAIFLILVSACILRFGTNSFCNSIISLNLTISCSEAQKTSWTPSGTAVQFYSNLHTAETSSWVNLILWCLALLLQAMQCKFKATSYQPQERGDQEWSSETDALVGHHQSHS</sequence>
<proteinExistence type="evidence at protein level"/>
<comment type="subcellular location">
    <subcellularLocation>
        <location evidence="3">Membrane</location>
        <topology evidence="3">Multi-pass membrane protein</topology>
    </subcellularLocation>
</comment>
<comment type="similarity">
    <text evidence="3">Belongs to the TMEM179 family.</text>
</comment>
<accession>Q9CY24</accession>
<accession>Q9D8L7</accession>
<name>T179B_MOUSE</name>
<organism>
    <name type="scientific">Mus musculus</name>
    <name type="common">Mouse</name>
    <dbReference type="NCBI Taxonomy" id="10090"/>
    <lineage>
        <taxon>Eukaryota</taxon>
        <taxon>Metazoa</taxon>
        <taxon>Chordata</taxon>
        <taxon>Craniata</taxon>
        <taxon>Vertebrata</taxon>
        <taxon>Euteleostomi</taxon>
        <taxon>Mammalia</taxon>
        <taxon>Eutheria</taxon>
        <taxon>Euarchontoglires</taxon>
        <taxon>Glires</taxon>
        <taxon>Rodentia</taxon>
        <taxon>Myomorpha</taxon>
        <taxon>Muroidea</taxon>
        <taxon>Muridae</taxon>
        <taxon>Murinae</taxon>
        <taxon>Mus</taxon>
        <taxon>Mus</taxon>
    </lineage>
</organism>
<evidence type="ECO:0000250" key="1">
    <source>
        <dbReference type="UniProtKB" id="Q7Z7N9"/>
    </source>
</evidence>
<evidence type="ECO:0000255" key="2"/>
<evidence type="ECO:0000305" key="3"/>
<feature type="chain" id="PRO_0000328988" description="Transmembrane protein 179B">
    <location>
        <begin position="1"/>
        <end position="219"/>
    </location>
</feature>
<feature type="transmembrane region" description="Helical" evidence="2">
    <location>
        <begin position="9"/>
        <end position="29"/>
    </location>
</feature>
<feature type="transmembrane region" description="Helical" evidence="2">
    <location>
        <begin position="65"/>
        <end position="85"/>
    </location>
</feature>
<feature type="transmembrane region" description="Helical" evidence="2">
    <location>
        <begin position="98"/>
        <end position="118"/>
    </location>
</feature>
<feature type="transmembrane region" description="Helical" evidence="2">
    <location>
        <begin position="162"/>
        <end position="182"/>
    </location>
</feature>
<feature type="modified residue" description="Phosphoserine" evidence="1">
    <location>
        <position position="206"/>
    </location>
</feature>
<feature type="sequence conflict" description="In Ref. 1; BAB25340." evidence="3" ref="1">
    <original>S</original>
    <variation>N</variation>
    <location>
        <position position="140"/>
    </location>
</feature>
<gene>
    <name type="primary">Tmem179b</name>
</gene>
<reference key="1">
    <citation type="journal article" date="2005" name="Science">
        <title>The transcriptional landscape of the mammalian genome.</title>
        <authorList>
            <person name="Carninci P."/>
            <person name="Kasukawa T."/>
            <person name="Katayama S."/>
            <person name="Gough J."/>
            <person name="Frith M.C."/>
            <person name="Maeda N."/>
            <person name="Oyama R."/>
            <person name="Ravasi T."/>
            <person name="Lenhard B."/>
            <person name="Wells C."/>
            <person name="Kodzius R."/>
            <person name="Shimokawa K."/>
            <person name="Bajic V.B."/>
            <person name="Brenner S.E."/>
            <person name="Batalov S."/>
            <person name="Forrest A.R."/>
            <person name="Zavolan M."/>
            <person name="Davis M.J."/>
            <person name="Wilming L.G."/>
            <person name="Aidinis V."/>
            <person name="Allen J.E."/>
            <person name="Ambesi-Impiombato A."/>
            <person name="Apweiler R."/>
            <person name="Aturaliya R.N."/>
            <person name="Bailey T.L."/>
            <person name="Bansal M."/>
            <person name="Baxter L."/>
            <person name="Beisel K.W."/>
            <person name="Bersano T."/>
            <person name="Bono H."/>
            <person name="Chalk A.M."/>
            <person name="Chiu K.P."/>
            <person name="Choudhary V."/>
            <person name="Christoffels A."/>
            <person name="Clutterbuck D.R."/>
            <person name="Crowe M.L."/>
            <person name="Dalla E."/>
            <person name="Dalrymple B.P."/>
            <person name="de Bono B."/>
            <person name="Della Gatta G."/>
            <person name="di Bernardo D."/>
            <person name="Down T."/>
            <person name="Engstrom P."/>
            <person name="Fagiolini M."/>
            <person name="Faulkner G."/>
            <person name="Fletcher C.F."/>
            <person name="Fukushima T."/>
            <person name="Furuno M."/>
            <person name="Futaki S."/>
            <person name="Gariboldi M."/>
            <person name="Georgii-Hemming P."/>
            <person name="Gingeras T.R."/>
            <person name="Gojobori T."/>
            <person name="Green R.E."/>
            <person name="Gustincich S."/>
            <person name="Harbers M."/>
            <person name="Hayashi Y."/>
            <person name="Hensch T.K."/>
            <person name="Hirokawa N."/>
            <person name="Hill D."/>
            <person name="Huminiecki L."/>
            <person name="Iacono M."/>
            <person name="Ikeo K."/>
            <person name="Iwama A."/>
            <person name="Ishikawa T."/>
            <person name="Jakt M."/>
            <person name="Kanapin A."/>
            <person name="Katoh M."/>
            <person name="Kawasawa Y."/>
            <person name="Kelso J."/>
            <person name="Kitamura H."/>
            <person name="Kitano H."/>
            <person name="Kollias G."/>
            <person name="Krishnan S.P."/>
            <person name="Kruger A."/>
            <person name="Kummerfeld S.K."/>
            <person name="Kurochkin I.V."/>
            <person name="Lareau L.F."/>
            <person name="Lazarevic D."/>
            <person name="Lipovich L."/>
            <person name="Liu J."/>
            <person name="Liuni S."/>
            <person name="McWilliam S."/>
            <person name="Madan Babu M."/>
            <person name="Madera M."/>
            <person name="Marchionni L."/>
            <person name="Matsuda H."/>
            <person name="Matsuzawa S."/>
            <person name="Miki H."/>
            <person name="Mignone F."/>
            <person name="Miyake S."/>
            <person name="Morris K."/>
            <person name="Mottagui-Tabar S."/>
            <person name="Mulder N."/>
            <person name="Nakano N."/>
            <person name="Nakauchi H."/>
            <person name="Ng P."/>
            <person name="Nilsson R."/>
            <person name="Nishiguchi S."/>
            <person name="Nishikawa S."/>
            <person name="Nori F."/>
            <person name="Ohara O."/>
            <person name="Okazaki Y."/>
            <person name="Orlando V."/>
            <person name="Pang K.C."/>
            <person name="Pavan W.J."/>
            <person name="Pavesi G."/>
            <person name="Pesole G."/>
            <person name="Petrovsky N."/>
            <person name="Piazza S."/>
            <person name="Reed J."/>
            <person name="Reid J.F."/>
            <person name="Ring B.Z."/>
            <person name="Ringwald M."/>
            <person name="Rost B."/>
            <person name="Ruan Y."/>
            <person name="Salzberg S.L."/>
            <person name="Sandelin A."/>
            <person name="Schneider C."/>
            <person name="Schoenbach C."/>
            <person name="Sekiguchi K."/>
            <person name="Semple C.A."/>
            <person name="Seno S."/>
            <person name="Sessa L."/>
            <person name="Sheng Y."/>
            <person name="Shibata Y."/>
            <person name="Shimada H."/>
            <person name="Shimada K."/>
            <person name="Silva D."/>
            <person name="Sinclair B."/>
            <person name="Sperling S."/>
            <person name="Stupka E."/>
            <person name="Sugiura K."/>
            <person name="Sultana R."/>
            <person name="Takenaka Y."/>
            <person name="Taki K."/>
            <person name="Tammoja K."/>
            <person name="Tan S.L."/>
            <person name="Tang S."/>
            <person name="Taylor M.S."/>
            <person name="Tegner J."/>
            <person name="Teichmann S.A."/>
            <person name="Ueda H.R."/>
            <person name="van Nimwegen E."/>
            <person name="Verardo R."/>
            <person name="Wei C.L."/>
            <person name="Yagi K."/>
            <person name="Yamanishi H."/>
            <person name="Zabarovsky E."/>
            <person name="Zhu S."/>
            <person name="Zimmer A."/>
            <person name="Hide W."/>
            <person name="Bult C."/>
            <person name="Grimmond S.M."/>
            <person name="Teasdale R.D."/>
            <person name="Liu E.T."/>
            <person name="Brusic V."/>
            <person name="Quackenbush J."/>
            <person name="Wahlestedt C."/>
            <person name="Mattick J.S."/>
            <person name="Hume D.A."/>
            <person name="Kai C."/>
            <person name="Sasaki D."/>
            <person name="Tomaru Y."/>
            <person name="Fukuda S."/>
            <person name="Kanamori-Katayama M."/>
            <person name="Suzuki M."/>
            <person name="Aoki J."/>
            <person name="Arakawa T."/>
            <person name="Iida J."/>
            <person name="Imamura K."/>
            <person name="Itoh M."/>
            <person name="Kato T."/>
            <person name="Kawaji H."/>
            <person name="Kawagashira N."/>
            <person name="Kawashima T."/>
            <person name="Kojima M."/>
            <person name="Kondo S."/>
            <person name="Konno H."/>
            <person name="Nakano K."/>
            <person name="Ninomiya N."/>
            <person name="Nishio T."/>
            <person name="Okada M."/>
            <person name="Plessy C."/>
            <person name="Shibata K."/>
            <person name="Shiraki T."/>
            <person name="Suzuki S."/>
            <person name="Tagami M."/>
            <person name="Waki K."/>
            <person name="Watahiki A."/>
            <person name="Okamura-Oho Y."/>
            <person name="Suzuki H."/>
            <person name="Kawai J."/>
            <person name="Hayashizaki Y."/>
        </authorList>
    </citation>
    <scope>NUCLEOTIDE SEQUENCE [LARGE SCALE MRNA]</scope>
    <source>
        <strain>C57BL/6J</strain>
        <tissue>Liver</tissue>
        <tissue>Pancreas</tissue>
    </source>
</reference>
<reference key="2">
    <citation type="journal article" date="2004" name="Genome Res.">
        <title>The status, quality, and expansion of the NIH full-length cDNA project: the Mammalian Gene Collection (MGC).</title>
        <authorList>
            <consortium name="The MGC Project Team"/>
        </authorList>
    </citation>
    <scope>NUCLEOTIDE SEQUENCE [LARGE SCALE MRNA]</scope>
    <source>
        <tissue>Brain</tissue>
    </source>
</reference>
<reference key="3">
    <citation type="journal article" date="2010" name="Cell">
        <title>A tissue-specific atlas of mouse protein phosphorylation and expression.</title>
        <authorList>
            <person name="Huttlin E.L."/>
            <person name="Jedrychowski M.P."/>
            <person name="Elias J.E."/>
            <person name="Goswami T."/>
            <person name="Rad R."/>
            <person name="Beausoleil S.A."/>
            <person name="Villen J."/>
            <person name="Haas W."/>
            <person name="Sowa M.E."/>
            <person name="Gygi S.P."/>
        </authorList>
    </citation>
    <scope>IDENTIFICATION BY MASS SPECTROMETRY [LARGE SCALE ANALYSIS]</scope>
    <source>
        <tissue>Brain</tissue>
        <tissue>Spleen</tissue>
    </source>
</reference>
<keyword id="KW-0472">Membrane</keyword>
<keyword id="KW-0597">Phosphoprotein</keyword>
<keyword id="KW-1185">Reference proteome</keyword>
<keyword id="KW-0812">Transmembrane</keyword>
<keyword id="KW-1133">Transmembrane helix</keyword>